<name>MTA1_MOUSE</name>
<reference key="1">
    <citation type="journal article" date="2002" name="Proc. Natl. Acad. Sci. U.S.A.">
        <title>The origin of a developmentally regulated Igh replicon is located near the border of regulatory domains for Igh replication and expression.</title>
        <authorList>
            <person name="Zhou J."/>
            <person name="Ashouian N."/>
            <person name="Delepine M."/>
            <person name="Matsuda F."/>
            <person name="Chevillard C."/>
            <person name="Riblet R."/>
            <person name="Schildkraut C.L."/>
            <person name="Birshtein B.K."/>
        </authorList>
    </citation>
    <scope>NUCLEOTIDE SEQUENCE [GENOMIC DNA / MRNA]</scope>
    <source>
        <strain>BALB/cJ</strain>
    </source>
</reference>
<reference key="2">
    <citation type="journal article" date="2001" name="Gene">
        <title>Differential expression and subcellular distribution of the mouse metastasis-associated proteins Mta1 and Mta3.</title>
        <authorList>
            <person name="Simpson A."/>
            <person name="Uitto J."/>
            <person name="Rodeck U."/>
            <person name="Mahoney M.G."/>
        </authorList>
    </citation>
    <scope>NUCLEOTIDE SEQUENCE [MRNA]</scope>
    <scope>SUBCELLULAR LOCATION</scope>
    <source>
        <strain>129/Sv</strain>
    </source>
</reference>
<reference key="3">
    <citation type="submission" date="2000-03" db="EMBL/GenBank/DDBJ databases">
        <authorList>
            <person name="Takiguchi S."/>
        </authorList>
    </citation>
    <scope>NUCLEOTIDE SEQUENCE [GENOMIC DNA]</scope>
    <source>
        <strain>129/SvJ</strain>
        <tissue>Liver</tissue>
    </source>
</reference>
<reference key="4">
    <citation type="journal article" date="2004" name="Oncogene">
        <title>Metastatic tumor antigen 1 short form (MTA1s) associates with casein kinase I-gamma2, an estrogen-responsive kinase.</title>
        <authorList>
            <person name="Mishra S.K."/>
            <person name="Yang Z."/>
            <person name="Mazumdar A."/>
            <person name="Talukder A.H."/>
            <person name="Larose L."/>
            <person name="Kumar R."/>
        </authorList>
    </citation>
    <scope>PHOSPHORYLATION BY CSNK1G2/CK1</scope>
    <scope>MUTAGENESIS OF SER-322</scope>
    <scope>INTERACTION WITH CSNK1G2</scope>
    <scope>SUBCELLULAR LOCATION</scope>
</reference>
<reference key="5">
    <citation type="journal article" date="2006" name="Proc. Natl. Acad. Sci. U.S.A.">
        <title>MTA1, a transcriptional activator of breast cancer amplified sequence 3.</title>
        <authorList>
            <person name="Gururaj A.E."/>
            <person name="Singh R.R."/>
            <person name="Rayala S.K."/>
            <person name="Holm C."/>
            <person name="den Hollander P."/>
            <person name="Zhang H."/>
            <person name="Balasenthil S."/>
            <person name="Talukder A.H."/>
            <person name="Landberg G."/>
            <person name="Kumar R."/>
        </authorList>
    </citation>
    <scope>TISSUE SPECIFICITY</scope>
</reference>
<reference key="6">
    <citation type="journal article" date="2013" name="Proc. Natl. Acad. Sci. U.S.A.">
        <authorList>
            <person name="Gururaj A.E."/>
            <person name="Singh R.R."/>
            <person name="Rayala S.K."/>
            <person name="Holm C."/>
            <person name="den Hollander P."/>
            <person name="Zhang H."/>
            <person name="Balasenthil S."/>
            <person name="Talukder A.H."/>
            <person name="Landberg G."/>
            <person name="Kumar R."/>
        </authorList>
    </citation>
    <scope>ERRATUM OF PUBMED:16617102</scope>
</reference>
<reference key="7">
    <citation type="journal article" date="2007" name="Cancer Res.">
        <title>Identification of Pax5 as a target of MTA1 in B-cell lymphomas.</title>
        <authorList>
            <person name="Balasenthil S."/>
            <person name="Gururaj A.E."/>
            <person name="Talukder A.H."/>
            <person name="Bagheri-Yarmand R."/>
            <person name="Arrington T."/>
            <person name="Haas B.J."/>
            <person name="Braisted J.C."/>
            <person name="Kim I."/>
            <person name="Lee N.H."/>
            <person name="Kumar R."/>
        </authorList>
    </citation>
    <scope>FUNCTION</scope>
</reference>
<reference key="8">
    <citation type="journal article" date="2007" name="Proc. Natl. Acad. Sci. U.S.A.">
        <title>Repression of Six3 by a corepressor regulates rhodopsin expression.</title>
        <authorList>
            <person name="Manavathi B."/>
            <person name="Peng S."/>
            <person name="Rayala S.K."/>
            <person name="Talukder A.H."/>
            <person name="Wang M.H."/>
            <person name="Wang R.A."/>
            <person name="Balasenthil S."/>
            <person name="Agarwal N."/>
            <person name="Frishman L.J."/>
            <person name="Kumar R."/>
        </authorList>
    </citation>
    <scope>INTERACTION WITH SIX3</scope>
</reference>
<reference key="9">
    <citation type="journal article" date="2007" name="Proc. Natl. Acad. Sci. U.S.A.">
        <title>Large-scale phosphorylation analysis of mouse liver.</title>
        <authorList>
            <person name="Villen J."/>
            <person name="Beausoleil S.A."/>
            <person name="Gerber S.A."/>
            <person name="Gygi S.P."/>
        </authorList>
    </citation>
    <scope>PHOSPHORYLATION [LARGE SCALE ANALYSIS] AT THR-564</scope>
    <scope>IDENTIFICATION BY MASS SPECTROMETRY [LARGE SCALE ANALYSIS]</scope>
    <source>
        <tissue>Liver</tissue>
    </source>
</reference>
<reference key="10">
    <citation type="journal article" date="2009" name="J. Biol. Chem.">
        <title>MTA1 coregulator regulates p53 stability and function.</title>
        <authorList>
            <person name="Li D.Q."/>
            <person name="Divijendra Natha Reddy S."/>
            <person name="Pakala S.B."/>
            <person name="Wu X."/>
            <person name="Zhang Y."/>
            <person name="Rayala S.K."/>
            <person name="Kumar R."/>
        </authorList>
    </citation>
    <scope>FUNCTION</scope>
    <scope>INTERACTION WITH TP53</scope>
</reference>
<reference key="11">
    <citation type="journal article" date="2009" name="Proc. Natl. Acad. Sci. U.S.A.">
        <title>E3 ubiquitin ligase COP1 regulates the stability and functions of MTA1.</title>
        <authorList>
            <person name="Li D.Q."/>
            <person name="Ohshiro K."/>
            <person name="Reddy S.D."/>
            <person name="Pakala S.B."/>
            <person name="Lee M.H."/>
            <person name="Zhang Y."/>
            <person name="Rayala S.K."/>
            <person name="Kumar R."/>
        </authorList>
    </citation>
    <scope>FUNCTION</scope>
</reference>
<reference key="12">
    <citation type="journal article" date="2010" name="Cancer Res.">
        <title>Metastasis-associated protein 1 and its short form variant stimulates Wnt1 transcription through promoting its derepression from Six3 corepressor.</title>
        <authorList>
            <person name="Kumar R."/>
            <person name="Balasenthil S."/>
            <person name="Manavathi B."/>
            <person name="Rayala S.K."/>
            <person name="Pakala S.B."/>
        </authorList>
    </citation>
    <scope>FUNCTION</scope>
    <scope>SUBCELLULAR LOCATION</scope>
</reference>
<reference key="13">
    <citation type="journal article" date="2010" name="Cell">
        <title>A tissue-specific atlas of mouse protein phosphorylation and expression.</title>
        <authorList>
            <person name="Huttlin E.L."/>
            <person name="Jedrychowski M.P."/>
            <person name="Elias J.E."/>
            <person name="Goswami T."/>
            <person name="Rad R."/>
            <person name="Beausoleil S.A."/>
            <person name="Villen J."/>
            <person name="Haas W."/>
            <person name="Sowa M.E."/>
            <person name="Gygi S.P."/>
        </authorList>
    </citation>
    <scope>PHOSPHORYLATION [LARGE SCALE ANALYSIS] AT SER-386; SER-449; THR-564 AND SER-576</scope>
    <scope>IDENTIFICATION BY MASS SPECTROMETRY [LARGE SCALE ANALYSIS]</scope>
    <source>
        <tissue>Brain</tissue>
        <tissue>Kidney</tissue>
        <tissue>Spleen</tissue>
        <tissue>Testis</tissue>
    </source>
</reference>
<reference key="14">
    <citation type="journal article" date="2010" name="J. Biol. Chem.">
        <title>Revelation of p53-independent function of MTA1 in DNA damage response via modulation of the p21 WAF1-proliferating cell nuclear antigen pathway.</title>
        <authorList>
            <person name="Li D.Q."/>
            <person name="Pakala S.B."/>
            <person name="Reddy S.D."/>
            <person name="Ohshiro K."/>
            <person name="Peng S.H."/>
            <person name="Lian Y."/>
            <person name="Fu S.W."/>
            <person name="Kumar R."/>
        </authorList>
    </citation>
    <scope>FUNCTION</scope>
</reference>
<reference key="15">
    <citation type="journal article" date="2010" name="J. Biol. Chem.">
        <title>Regulation of NF-kappaB circuitry by a component of the nucleosome remodeling and deacetylase complex controls inflammatory response homeostasis.</title>
        <authorList>
            <person name="Pakala S.B."/>
            <person name="Bui-Nguyen T.M."/>
            <person name="Reddy S.D."/>
            <person name="Li D.Q."/>
            <person name="Peng S."/>
            <person name="Rayala S.K."/>
            <person name="Behringer R.R."/>
            <person name="Kumar R."/>
        </authorList>
    </citation>
    <scope>RETRACTED PAPER</scope>
</reference>
<reference key="16">
    <citation type="journal article" date="2017" name="J. Biol. Chem.">
        <authorList>
            <person name="Pakala S.B."/>
            <person name="Bui-Nguyen T.M."/>
            <person name="Reddy S.D."/>
            <person name="Li D.Q."/>
            <person name="Peng S."/>
            <person name="Rayala S.K."/>
            <person name="Behringer R.R."/>
            <person name="Kumar R."/>
        </authorList>
    </citation>
    <scope>CAUTION</scope>
    <scope>RETRACTION NOTICE OF PUBMED:20519513</scope>
</reference>
<reference key="17">
    <citation type="journal article" date="2011" name="J. Biol. Chem.">
        <title>SUMOylation and SUMO-interacting motif (SIM) of metastasis tumor antigen 1 (MTA1) synergistically regulate its transcriptional repressor function.</title>
        <authorList>
            <person name="Cong L."/>
            <person name="Pakala S.B."/>
            <person name="Ohshiro K."/>
            <person name="Li D.Q."/>
            <person name="Kumar R."/>
        </authorList>
    </citation>
    <scope>FUNCTION</scope>
</reference>
<reference key="18">
    <citation type="journal article" date="2013" name="Nat. Commun.">
        <title>Metastasis-associated protein 1 is an integral component of the circadian molecular machinery.</title>
        <authorList>
            <person name="Li D.Q."/>
            <person name="Pakala S.B."/>
            <person name="Reddy S.D."/>
            <person name="Peng S."/>
            <person name="Balasenthil S."/>
            <person name="Deng C.X."/>
            <person name="Lee C.C."/>
            <person name="Rea M.A."/>
            <person name="Kumar R."/>
        </authorList>
    </citation>
    <scope>FUNCTION</scope>
    <scope>DISRUPTION PHENOTYPE</scope>
    <scope>INTERACTION WITH CLOCK AND BMAL1</scope>
</reference>
<reference key="19">
    <citation type="journal article" date="2014" name="Oncotarget">
        <title>The subcellular distribution and function of MTA1 in cancer differentiation.</title>
        <authorList>
            <person name="Liu J."/>
            <person name="Xu D."/>
            <person name="Wang H."/>
            <person name="Zhang Y."/>
            <person name="Chang Y."/>
            <person name="Zhang J."/>
            <person name="Wang J."/>
            <person name="Li C."/>
            <person name="Liu H."/>
            <person name="Zhao M."/>
            <person name="Lin C."/>
            <person name="Zhan Q."/>
            <person name="Huang C."/>
            <person name="Qian H."/>
        </authorList>
    </citation>
    <scope>SUBCELLULAR LOCATION</scope>
    <scope>TISSUE SPECIFICITY</scope>
</reference>
<reference key="20">
    <citation type="journal article" date="2016" name="Cell Rep.">
        <title>A Functional Switch of NuRD Chromatin Remodeling Complex Subunits Regulates Mouse Cortical Development.</title>
        <authorList>
            <person name="Nitarska J."/>
            <person name="Smith J.G."/>
            <person name="Sherlock W.T."/>
            <person name="Hillege M.M."/>
            <person name="Nott A."/>
            <person name="Barshop W.D."/>
            <person name="Vashisht A.A."/>
            <person name="Wohlschlegel J.A."/>
            <person name="Mitter R."/>
            <person name="Riccio A."/>
        </authorList>
    </citation>
    <scope>IDENTIFICATION IN THE NURD COMPLEX</scope>
    <scope>IDENTIFICATION BY MASS SPECTROMETRY</scope>
</reference>
<reference key="21">
    <citation type="journal article" date="2017" name="J. Cell Sci.">
        <title>Tfcp2l1 represses multiple lineage commitment of mouse embryonic stem cells through MTA1 and LEF1.</title>
        <authorList>
            <person name="Liu K."/>
            <person name="Zhang Y."/>
            <person name="Liu D."/>
            <person name="Ying Q.L."/>
            <person name="Ye S."/>
        </authorList>
    </citation>
    <scope>FUNCTION</scope>
    <scope>INTERACTION WITH TFCP2L1</scope>
</reference>
<reference key="22">
    <citation type="journal article" date="2018" name="Nat. Commun.">
        <title>A variant NuRD complex containing PWWP2A/B excludes MBD2/3 to regulate transcription at active genes.</title>
        <authorList>
            <person name="Zhang T."/>
            <person name="Wei G."/>
            <person name="Millard C.J."/>
            <person name="Fischer R."/>
            <person name="Konietzny R."/>
            <person name="Kessler B.M."/>
            <person name="Schwabe J.W.R."/>
            <person name="Brockdorff N."/>
        </authorList>
    </citation>
    <scope>INTERACTION WITH PWWP2A AND PWWP2B</scope>
</reference>
<reference key="23">
    <citation type="journal article" date="2021" name="Adv. Sci.">
        <title>PWWP2B Fine-Tunes Adipose Thermogenesis by Stabilizing HDACs in a NuRD Subcomplex.</title>
        <authorList>
            <person name="Yan L."/>
            <person name="Jin W."/>
            <person name="Zhao Q."/>
            <person name="Cui X."/>
            <person name="Shi T."/>
            <person name="Xu Y."/>
            <person name="Li F."/>
            <person name="Jin W."/>
            <person name="Zhang Z."/>
            <person name="Zhang Z."/>
            <person name="Tang Q.Q."/>
            <person name="Pan D."/>
        </authorList>
    </citation>
    <scope>INTERACTION WITH PWWP2B</scope>
</reference>
<evidence type="ECO:0000250" key="1"/>
<evidence type="ECO:0000250" key="2">
    <source>
        <dbReference type="UniProtKB" id="Q13330"/>
    </source>
</evidence>
<evidence type="ECO:0000255" key="3"/>
<evidence type="ECO:0000255" key="4">
    <source>
        <dbReference type="PROSITE-ProRule" id="PRU00370"/>
    </source>
</evidence>
<evidence type="ECO:0000255" key="5">
    <source>
        <dbReference type="PROSITE-ProRule" id="PRU00512"/>
    </source>
</evidence>
<evidence type="ECO:0000255" key="6">
    <source>
        <dbReference type="PROSITE-ProRule" id="PRU00624"/>
    </source>
</evidence>
<evidence type="ECO:0000256" key="7">
    <source>
        <dbReference type="SAM" id="MobiDB-lite"/>
    </source>
</evidence>
<evidence type="ECO:0000269" key="8">
    <source>
    </source>
</evidence>
<evidence type="ECO:0000269" key="9">
    <source>
    </source>
</evidence>
<evidence type="ECO:0000269" key="10">
    <source>
    </source>
</evidence>
<evidence type="ECO:0000269" key="11">
    <source>
    </source>
</evidence>
<evidence type="ECO:0000269" key="12">
    <source>
    </source>
</evidence>
<evidence type="ECO:0000269" key="13">
    <source>
    </source>
</evidence>
<evidence type="ECO:0000269" key="14">
    <source>
    </source>
</evidence>
<evidence type="ECO:0000269" key="15">
    <source>
    </source>
</evidence>
<evidence type="ECO:0000269" key="16">
    <source>
    </source>
</evidence>
<evidence type="ECO:0000269" key="17">
    <source>
    </source>
</evidence>
<evidence type="ECO:0000269" key="18">
    <source>
    </source>
</evidence>
<evidence type="ECO:0000269" key="19">
    <source>
    </source>
</evidence>
<evidence type="ECO:0000269" key="20">
    <source>
    </source>
</evidence>
<evidence type="ECO:0000269" key="21">
    <source>
    </source>
</evidence>
<evidence type="ECO:0000269" key="22">
    <source>
    </source>
</evidence>
<evidence type="ECO:0000269" key="23">
    <source>
    </source>
</evidence>
<evidence type="ECO:0000269" key="24">
    <source>
    </source>
</evidence>
<evidence type="ECO:0000305" key="25"/>
<evidence type="ECO:0000305" key="26">
    <source>
    </source>
</evidence>
<evidence type="ECO:0007744" key="27">
    <source>
    </source>
</evidence>
<evidence type="ECO:0007744" key="28">
    <source>
    </source>
</evidence>
<keyword id="KW-0007">Acetylation</keyword>
<keyword id="KW-0010">Activator</keyword>
<keyword id="KW-0090">Biological rhythms</keyword>
<keyword id="KW-0963">Cytoplasm</keyword>
<keyword id="KW-0206">Cytoskeleton</keyword>
<keyword id="KW-0238">DNA-binding</keyword>
<keyword id="KW-1017">Isopeptide bond</keyword>
<keyword id="KW-0479">Metal-binding</keyword>
<keyword id="KW-0539">Nucleus</keyword>
<keyword id="KW-0597">Phosphoprotein</keyword>
<keyword id="KW-1185">Reference proteome</keyword>
<keyword id="KW-0678">Repressor</keyword>
<keyword id="KW-0804">Transcription</keyword>
<keyword id="KW-0805">Transcription regulation</keyword>
<keyword id="KW-0832">Ubl conjugation</keyword>
<keyword id="KW-0862">Zinc</keyword>
<keyword id="KW-0863">Zinc-finger</keyword>
<comment type="function">
    <text evidence="2 12 13 14 15 17 18 19 22">Transcriptional coregulator which can act as both a transcriptional corepressor and coactivator (PubMed:20071335, PubMed:20682799). Acts as a component of the histone deacetylase NuRD complex which participates in the remodeling of chromatin (By similarity). In the NuRD complex, regulates transcription of its targets by modifying the acetylation status of the target chromatin and cofactor accessibility to the target DNA (PubMed:17671180). In conjunction with other components of NuRD, acts as a transcriptional corepressor of BRCA1, ESR1, TFF1 and CDKN1A (PubMed:20071335, PubMed:21965678). Acts as a transcriptional coactivator of BCAS3, PAX5 and SUMO2, independent of the NuRD complex (PubMed:17671180, PubMed:21965678). Stimulates the expression of WNT1 by inhibiting the expression of its transcriptional corepressor SIX3 (PubMed:20682799). Regulates p53-dependent and -independent DNA repair processes following genotoxic stress (PubMed:19805145, PubMed:20071335). Regulates the stability and function of p53/TP53 by inhibiting its ubiquitination by COP1 and MDM2 thereby regulating the p53-dependent DNA repair (PubMed:19805145, PubMed:19837670). Plays a role in the regulation of the circadian clock and is essential for the generation and maintenance of circadian rhythms under constant light and for normal entrainment of behavior to light-dark (LD) cycles (PubMed:24089055). Positively regulates the CLOCK-BMAL1 heterodimer mediated transcriptional activation of its own transcription and the transcription of CRY1 (PubMed:24089055). Regulates deacetylation of BMAL1 by regulating SIRT1 expression, resulting in derepressing CRY1-mediated transcription repression (PubMed:24089055). With Tfcp2l1, promotes establishment and maintenance of pluripotency in embryonic stem cells (ESCs) and inhibits endoderm differentiation (PubMed:28982712).</text>
</comment>
<comment type="subunit">
    <text evidence="2 9 11 14 19 21 22 23 24">Component of the nucleosome remodeling and deacetylase (NuRD) repressor complex, composed of core proteins MTA1, MTA2, MTA3, RBBP4, RBBP7, HDAC1, HDAC2, MBD2, MBD3, and peripherally associated proteins CDK2AP1, CDK2AP2, GATAD2A, GATAD2B, CHD3, CHD4 and CHD5 (PubMed:27806305). The exact stoichiometry of the NuRD complex is unknown, and some subunits such as MBD2 and MBD3, GATAD2A and GATAD2B, and CHD3, CHD4 and CHD5 define mutually exclusive NuRD complexes (PubMed:27806305). Interacts with RBBP4; the interaction is direct (By similarity). Interacts with BMAL1 (PubMed:24089055). Interacts with CLOCK (PubMed:24089055). Interacts with COP1 (PubMed:19805145). Interacts with CSNK1G2 in the cytoplasm (PubMed:15077195). Interacts with EP300 (PubMed:16617102). Interacts with HDAC2 (PubMed:17671180, PubMed:19805145, PubMed:21965678, PubMed:24970816). Interacts with ITGB3BP/CENPR (By similarity). Interacts with MBD3L2 (By similarity). Interacts with MDM2 (PubMed:19837670). Interacts with NACC2 (By similarity). Interacts with p53/TP53 (PubMed:19837670). Interacts with PIAS1 (PubMed:21965678). Interacts with PIAS3 (PubMed:21965678). Interacts with PIAS4 (PubMed:21965678). Interacts with PWWP2A (PubMed:30228260). Interacts with PWWP2B (PubMed:34180153). Interacts with SENP1 (PubMed:21965678). Interacts with SENP2 (PubMed:21965678). Interacts with SIX3; facilitates the binding of SIX3 to the core DNA motif of SIX3 promoter (PubMed:17666527). Interacts with SUMO1 (PubMed:21965678). Interacts with SUMO2 (PubMed:21965678). Interacts with TFCP2L1; which is indispensable for TFCP2L1-mediated self-renewal-promoting effect and endoderm-inhibiting action (PubMed:28982712). Interacts with TFAP2C (By similarity). Interacts with TPR (PubMed:24970816). Interacts with UBE2I/UBC9 (PubMed:21965678).</text>
</comment>
<comment type="interaction">
    <interactant intactId="EBI-1216353">
        <id>Q8K4B0</id>
    </interactant>
    <interactant intactId="EBI-1202287">
        <id>Q64364</id>
        <label>Cdkn2a</label>
    </interactant>
    <organismsDiffer>false</organismsDiffer>
    <experiments>2</experiments>
</comment>
<comment type="interaction">
    <interactant intactId="EBI-1216353">
        <id>Q8K4B0</id>
    </interactant>
    <interactant intactId="EBI-2297327">
        <id>Q62233</id>
        <label>Six3</label>
    </interactant>
    <organismsDiffer>false</organismsDiffer>
    <experiments>2</experiments>
</comment>
<comment type="subcellular location">
    <subcellularLocation>
        <location evidence="8 17 20">Nucleus</location>
    </subcellularLocation>
    <subcellularLocation>
        <location evidence="5 6">Nucleus envelope</location>
    </subcellularLocation>
    <subcellularLocation>
        <location evidence="9 17 20">Cytoplasm</location>
    </subcellularLocation>
    <subcellularLocation>
        <location evidence="2">Cytoplasm</location>
        <location evidence="2">Cytoskeleton</location>
    </subcellularLocation>
    <text evidence="2 20">Associated with microtubules. Primarily localized in the cytoplasm in embryonic tissues (PubMed:24970816). Localization at the nuclear envelope is TPR-dependent (By similarity).</text>
</comment>
<comment type="tissue specificity">
    <text evidence="10 20">Widely expressed but not in skeletal muscle. Highly expressed in the brain, liver, kidney and cardiac muscle and in mammary tumors.</text>
</comment>
<comment type="developmental stage">
    <text>Expressed at high levels in embryonic nerve tissues, such as the brain, eyes, and spinal cord.</text>
</comment>
<comment type="PTM">
    <text evidence="9">Phosphorylation by CSNK1G2/CK1 triggered by estrogen enhances corepression of estrogen receptor (ER).</text>
</comment>
<comment type="PTM">
    <text evidence="1">Acetylation is essential for its transcriptional coactivator activity.</text>
</comment>
<comment type="PTM">
    <text evidence="1">Sumoylation positively regulates its transcriptional corepressor activity but does not affect the protein stability. Sumoylated preferentially by SUMO2 or SUMO3 than SUMO1. Sumoylation is enhanced by PIAS1/3/4 and preferentially sumoylated by SUMO2 in the presence of PIAS1/3/4. Desumoylated by SENP1 (By similarity).</text>
</comment>
<comment type="PTM">
    <text evidence="1">Ubiquitinated by COP1, which leads to proteasomal degradation.</text>
</comment>
<comment type="disruption phenotype">
    <text evidence="19">Mice exhibit a disruption of the free-running period of circadian rhythms under constant light and normal entrainment of behavior to light-dark (LD) cycles.</text>
</comment>
<comment type="similarity">
    <text evidence="25">Belongs to the metastasis-associated protein family.</text>
</comment>
<comment type="caution">
    <text evidence="16 26">Was originally thought to play a role in inflammatory responses both as a target and as a component of the NF-kappa-B signaling, to interact with the HDAC2, and be induced by lipopolysaccharide (LPS) (PubMed:20519513). However, this work was later retracted (PubMed:28314777). Nevertheless, the interaction with HDAC2 has been demonstrated by several publications in the human ortholog.</text>
</comment>
<comment type="sequence caution" evidence="25">
    <conflict type="erroneous initiation">
        <sequence resource="EMBL-CDS" id="BAC57413"/>
    </conflict>
    <text>Truncated N-terminus.</text>
</comment>
<accession>Q8K4B0</accession>
<accession>Q80UI1</accession>
<accession>Q8K4D4</accession>
<accession>Q924K9</accession>
<sequence>MAANMYRVGDYVYFENSSSNPYLIRRIEELNKTANGNVEAKVVCFYRRRDISSSLIALADKHATLSVCYRAGPGADTGEEGEVEEEVENPEMVDLPEKLKHQLRHRELFLSRQLESLPATHIRGKCSVTLLNETESLKSYLEREDFFFYSLVYDPQQKTLLADKGEIRVGNRYQADITDLLKEGEEDGRDQSKLETKVWEAHNPLVDKQIDQFLVVARSVGTFARALDCSSSVRQPSLHMSAAAASRDITLFHAMDTLHKNIYDISKAISALVPQGGPVLCRDEMEEWSASEANLFEEALEKYGKDFTDIQQDFLPWKSLTSIIEYYYMWKTTDRYVQQKRLKAAEAESKLKQVYIPNYNKPNPNQISASSVKATVVNGTGTPGQSPGAGRACESCYTTQSYQWYSWGPPNMQCRLCASCWTYWKKYGGLKMPTRLDGERPGPNRNNMSPHGIPARSSGSPKFAMKTRQAFYLHTTKLTRIARRLCREILRPWHAARHPYMPINSAAIKAECTARLPEASQSPLVLKQVVRKPLEAVLRYLETHPRPPKPDPVKSSSSVLSSLTPAKSAPVINNGSPTILGKRSYEQHNGVDGNMKKRLLMPSRGLANHGQTRHMGPSRNLLLNGKSYPTKVRLIRGGSLPPVKRRRMNWIDAPDDVFYMATEETRKIRKLLSSSETKRAARRPYKPIALRQSQALPLRPPPPAPVNDEPIVIED</sequence>
<protein>
    <recommendedName>
        <fullName>Metastasis-associated protein MTA1</fullName>
    </recommendedName>
</protein>
<feature type="chain" id="PRO_0000083494" description="Metastasis-associated protein MTA1">
    <location>
        <begin position="1"/>
        <end position="715"/>
    </location>
</feature>
<feature type="domain" description="BAH" evidence="4">
    <location>
        <begin position="1"/>
        <end position="164"/>
    </location>
</feature>
<feature type="domain" description="ELM2" evidence="5">
    <location>
        <begin position="165"/>
        <end position="276"/>
    </location>
</feature>
<feature type="domain" description="SANT" evidence="6">
    <location>
        <begin position="283"/>
        <end position="335"/>
    </location>
</feature>
<feature type="zinc finger region" description="GATA-type; atypical">
    <location>
        <begin position="393"/>
        <end position="420"/>
    </location>
</feature>
<feature type="region of interest" description="Disordered" evidence="7">
    <location>
        <begin position="437"/>
        <end position="460"/>
    </location>
</feature>
<feature type="region of interest" description="Disordered" evidence="7">
    <location>
        <begin position="542"/>
        <end position="590"/>
    </location>
</feature>
<feature type="region of interest" description="Interaction with RBBP4" evidence="2">
    <location>
        <begin position="656"/>
        <end position="686"/>
    </location>
</feature>
<feature type="region of interest" description="Disordered" evidence="7">
    <location>
        <begin position="673"/>
        <end position="715"/>
    </location>
</feature>
<feature type="short sequence motif" description="SH3-binding" evidence="3">
    <location>
        <begin position="545"/>
        <end position="552"/>
    </location>
</feature>
<feature type="short sequence motif" description="SH3-binding" evidence="3">
    <location>
        <begin position="696"/>
        <end position="705"/>
    </location>
</feature>
<feature type="short sequence motif" description="SUMO interaction motif 1 (SIM); crucial for efficient sumoylation" evidence="1">
    <location>
        <begin position="711"/>
        <end position="715"/>
    </location>
</feature>
<feature type="compositionally biased region" description="Basic and acidic residues" evidence="7">
    <location>
        <begin position="542"/>
        <end position="552"/>
    </location>
</feature>
<feature type="compositionally biased region" description="Low complexity" evidence="7">
    <location>
        <begin position="553"/>
        <end position="565"/>
    </location>
</feature>
<feature type="modified residue" description="Phosphoserine" evidence="28">
    <location>
        <position position="386"/>
    </location>
</feature>
<feature type="modified residue" description="Phosphoserine" evidence="28">
    <location>
        <position position="449"/>
    </location>
</feature>
<feature type="modified residue" description="Phosphoserine" evidence="2">
    <location>
        <position position="522"/>
    </location>
</feature>
<feature type="modified residue" description="Phosphothreonine" evidence="27 28">
    <location>
        <position position="564"/>
    </location>
</feature>
<feature type="modified residue" description="Phosphoserine" evidence="28">
    <location>
        <position position="576"/>
    </location>
</feature>
<feature type="modified residue" description="Phosphothreonine" evidence="2">
    <location>
        <position position="578"/>
    </location>
</feature>
<feature type="modified residue" description="N6-acetyllysine; alternate" evidence="2">
    <location>
        <position position="626"/>
    </location>
</feature>
<feature type="modified residue" description="Phosphoserine" evidence="2">
    <location>
        <position position="639"/>
    </location>
</feature>
<feature type="cross-link" description="Glycyl lysine isopeptide (Lys-Gly) (interchain with G-Cter in ubiquitin)" evidence="2">
    <location>
        <position position="182"/>
    </location>
</feature>
<feature type="cross-link" description="Glycyl lysine isopeptide (Lys-Gly) (interchain with G-Cter in SUMO2 and SUMO3)" evidence="1">
    <location>
        <position position="509"/>
    </location>
</feature>
<feature type="cross-link" description="Glycyl lysine isopeptide (Lys-Gly) (interchain with G-Cter in SUMO2)" evidence="2">
    <location>
        <position position="549"/>
    </location>
</feature>
<feature type="cross-link" description="Glycyl lysine isopeptide (Lys-Gly) (interchain with G-Cter in ubiquitin); alternate" evidence="2">
    <location>
        <position position="626"/>
    </location>
</feature>
<feature type="mutagenesis site" description="Reduction in the ability of MTA1S to repress ER transactivation." evidence="9">
    <original>S</original>
    <variation>A</variation>
    <location>
        <position position="322"/>
    </location>
</feature>
<feature type="sequence conflict" description="In Ref. 2; AAK83044." evidence="25" ref="2">
    <original>T</original>
    <variation>R</variation>
    <location>
        <position position="64"/>
    </location>
</feature>
<feature type="sequence conflict" description="In Ref. 2; AAK83044." evidence="25" ref="2">
    <location>
        <begin position="65"/>
        <end position="81"/>
    </location>
</feature>
<feature type="sequence conflict" description="In Ref. 2; AAK83044." evidence="25" ref="2">
    <original>C</original>
    <variation>W</variation>
    <location>
        <position position="420"/>
    </location>
</feature>
<gene>
    <name type="primary">Mta1</name>
</gene>
<dbReference type="EMBL" id="AF463504">
    <property type="protein sequence ID" value="AAM97588.1"/>
    <property type="molecule type" value="mRNA"/>
</dbReference>
<dbReference type="EMBL" id="AF450245">
    <property type="protein sequence ID" value="AAM97587.1"/>
    <property type="molecule type" value="Genomic_DNA"/>
</dbReference>
<dbReference type="EMBL" id="AF288137">
    <property type="protein sequence ID" value="AAK83044.1"/>
    <property type="molecule type" value="mRNA"/>
</dbReference>
<dbReference type="EMBL" id="AB039744">
    <property type="protein sequence ID" value="BAC57413.1"/>
    <property type="status" value="ALT_INIT"/>
    <property type="molecule type" value="Genomic_DNA"/>
</dbReference>
<dbReference type="RefSeq" id="NP_001351550.1">
    <property type="nucleotide sequence ID" value="NM_001364621.1"/>
</dbReference>
<dbReference type="RefSeq" id="XP_006515485.1">
    <property type="nucleotide sequence ID" value="XM_006515422.1"/>
</dbReference>
<dbReference type="SMR" id="Q8K4B0"/>
<dbReference type="BioGRID" id="228045">
    <property type="interactions" value="61"/>
</dbReference>
<dbReference type="ComplexPortal" id="CPX-953">
    <property type="entry name" value="MBD2/NuRD nucleosome remodeling and deacetylase complex"/>
</dbReference>
<dbReference type="ComplexPortal" id="CPX-954">
    <property type="entry name" value="MBD3/NuRD nucleosome remodeling and deacetylase complex"/>
</dbReference>
<dbReference type="CORUM" id="Q8K4B0"/>
<dbReference type="DIP" id="DIP-38226N"/>
<dbReference type="FunCoup" id="Q8K4B0">
    <property type="interactions" value="3819"/>
</dbReference>
<dbReference type="IntAct" id="Q8K4B0">
    <property type="interactions" value="47"/>
</dbReference>
<dbReference type="MINT" id="Q8K4B0"/>
<dbReference type="STRING" id="10090.ENSMUSP00000105349"/>
<dbReference type="iPTMnet" id="Q8K4B0"/>
<dbReference type="PhosphoSitePlus" id="Q8K4B0"/>
<dbReference type="jPOST" id="Q8K4B0"/>
<dbReference type="PaxDb" id="10090-ENSMUSP00000009099"/>
<dbReference type="ProteomicsDB" id="290066"/>
<dbReference type="Pumba" id="Q8K4B0"/>
<dbReference type="Antibodypedia" id="90">
    <property type="antibodies" value="432 antibodies from 36 providers"/>
</dbReference>
<dbReference type="Ensembl" id="ENSMUST00000009099.13">
    <property type="protein sequence ID" value="ENSMUSP00000009099.7"/>
    <property type="gene ID" value="ENSMUSG00000021144.15"/>
</dbReference>
<dbReference type="GeneID" id="116870"/>
<dbReference type="UCSC" id="uc007pfw.1">
    <property type="organism name" value="mouse"/>
</dbReference>
<dbReference type="AGR" id="MGI:2150037"/>
<dbReference type="MGI" id="MGI:2150037">
    <property type="gene designation" value="Mta1"/>
</dbReference>
<dbReference type="VEuPathDB" id="HostDB:ENSMUSG00000021144"/>
<dbReference type="eggNOG" id="KOG3554">
    <property type="taxonomic scope" value="Eukaryota"/>
</dbReference>
<dbReference type="GeneTree" id="ENSGT01030000234573"/>
<dbReference type="InParanoid" id="Q8K4B0"/>
<dbReference type="OMA" id="PFWPINV"/>
<dbReference type="OrthoDB" id="2193595at2759"/>
<dbReference type="PhylomeDB" id="Q8K4B0"/>
<dbReference type="TreeFam" id="TF106444"/>
<dbReference type="Reactome" id="R-MMU-3214815">
    <property type="pathway name" value="HDACs deacetylate histones"/>
</dbReference>
<dbReference type="Reactome" id="R-MMU-3232118">
    <property type="pathway name" value="SUMOylation of transcription factors"/>
</dbReference>
<dbReference type="Reactome" id="R-MMU-73762">
    <property type="pathway name" value="RNA Polymerase I Transcription Initiation"/>
</dbReference>
<dbReference type="Reactome" id="R-MMU-8943724">
    <property type="pathway name" value="Regulation of PTEN gene transcription"/>
</dbReference>
<dbReference type="BioGRID-ORCS" id="116870">
    <property type="hits" value="9 hits in 102 CRISPR screens"/>
</dbReference>
<dbReference type="ChiTaRS" id="Mta1">
    <property type="organism name" value="mouse"/>
</dbReference>
<dbReference type="PRO" id="PR:Q8K4B0"/>
<dbReference type="Proteomes" id="UP000000589">
    <property type="component" value="Chromosome 12"/>
</dbReference>
<dbReference type="RNAct" id="Q8K4B0">
    <property type="molecule type" value="protein"/>
</dbReference>
<dbReference type="Bgee" id="ENSMUSG00000021144">
    <property type="expression patterns" value="Expressed in somite and 257 other cell types or tissues"/>
</dbReference>
<dbReference type="ExpressionAtlas" id="Q8K4B0">
    <property type="expression patterns" value="baseline and differential"/>
</dbReference>
<dbReference type="GO" id="GO:0005737">
    <property type="term" value="C:cytoplasm"/>
    <property type="evidence" value="ECO:0000314"/>
    <property type="project" value="UniProtKB"/>
</dbReference>
<dbReference type="GO" id="GO:0005874">
    <property type="term" value="C:microtubule"/>
    <property type="evidence" value="ECO:0000250"/>
    <property type="project" value="UniProtKB"/>
</dbReference>
<dbReference type="GO" id="GO:0005635">
    <property type="term" value="C:nuclear envelope"/>
    <property type="evidence" value="ECO:0000250"/>
    <property type="project" value="UniProtKB"/>
</dbReference>
<dbReference type="GO" id="GO:0005654">
    <property type="term" value="C:nucleoplasm"/>
    <property type="evidence" value="ECO:0000304"/>
    <property type="project" value="Reactome"/>
</dbReference>
<dbReference type="GO" id="GO:0005634">
    <property type="term" value="C:nucleus"/>
    <property type="evidence" value="ECO:0000314"/>
    <property type="project" value="MGI"/>
</dbReference>
<dbReference type="GO" id="GO:0016581">
    <property type="term" value="C:NuRD complex"/>
    <property type="evidence" value="ECO:0000353"/>
    <property type="project" value="MGI"/>
</dbReference>
<dbReference type="GO" id="GO:0003682">
    <property type="term" value="F:chromatin binding"/>
    <property type="evidence" value="ECO:0007669"/>
    <property type="project" value="InterPro"/>
</dbReference>
<dbReference type="GO" id="GO:0000978">
    <property type="term" value="F:RNA polymerase II cis-regulatory region sequence-specific DNA binding"/>
    <property type="evidence" value="ECO:0000314"/>
    <property type="project" value="UniProtKB"/>
</dbReference>
<dbReference type="GO" id="GO:0003713">
    <property type="term" value="F:transcription coactivator activity"/>
    <property type="evidence" value="ECO:0000314"/>
    <property type="project" value="UniProtKB"/>
</dbReference>
<dbReference type="GO" id="GO:0008270">
    <property type="term" value="F:zinc ion binding"/>
    <property type="evidence" value="ECO:0007669"/>
    <property type="project" value="UniProtKB-KW"/>
</dbReference>
<dbReference type="GO" id="GO:0006338">
    <property type="term" value="P:chromatin remodeling"/>
    <property type="evidence" value="ECO:0000266"/>
    <property type="project" value="ComplexPortal"/>
</dbReference>
<dbReference type="GO" id="GO:0032922">
    <property type="term" value="P:circadian regulation of gene expression"/>
    <property type="evidence" value="ECO:0000315"/>
    <property type="project" value="UniProtKB"/>
</dbReference>
<dbReference type="GO" id="GO:0006302">
    <property type="term" value="P:double-strand break repair"/>
    <property type="evidence" value="ECO:0000315"/>
    <property type="project" value="UniProtKB"/>
</dbReference>
<dbReference type="GO" id="GO:0043153">
    <property type="term" value="P:entrainment of circadian clock by photoperiod"/>
    <property type="evidence" value="ECO:0000315"/>
    <property type="project" value="UniProtKB"/>
</dbReference>
<dbReference type="GO" id="GO:0045475">
    <property type="term" value="P:locomotor rhythm"/>
    <property type="evidence" value="ECO:0000315"/>
    <property type="project" value="UniProtKB"/>
</dbReference>
<dbReference type="GO" id="GO:0045892">
    <property type="term" value="P:negative regulation of DNA-templated transcription"/>
    <property type="evidence" value="ECO:0000303"/>
    <property type="project" value="ComplexPortal"/>
</dbReference>
<dbReference type="GO" id="GO:0045814">
    <property type="term" value="P:negative regulation of gene expression, epigenetic"/>
    <property type="evidence" value="ECO:0000250"/>
    <property type="project" value="UniProtKB"/>
</dbReference>
<dbReference type="GO" id="GO:0045893">
    <property type="term" value="P:positive regulation of DNA-templated transcription"/>
    <property type="evidence" value="ECO:0000303"/>
    <property type="project" value="ComplexPortal"/>
</dbReference>
<dbReference type="GO" id="GO:1902499">
    <property type="term" value="P:positive regulation of protein autoubiquitination"/>
    <property type="evidence" value="ECO:0000250"/>
    <property type="project" value="UniProtKB"/>
</dbReference>
<dbReference type="GO" id="GO:0043161">
    <property type="term" value="P:proteasome-mediated ubiquitin-dependent protein catabolic process"/>
    <property type="evidence" value="ECO:0000250"/>
    <property type="project" value="UniProtKB"/>
</dbReference>
<dbReference type="GO" id="GO:0042659">
    <property type="term" value="P:regulation of cell fate specification"/>
    <property type="evidence" value="ECO:0000303"/>
    <property type="project" value="ComplexPortal"/>
</dbReference>
<dbReference type="GO" id="GO:2000736">
    <property type="term" value="P:regulation of stem cell differentiation"/>
    <property type="evidence" value="ECO:0000303"/>
    <property type="project" value="ComplexPortal"/>
</dbReference>
<dbReference type="GO" id="GO:0010212">
    <property type="term" value="P:response to ionizing radiation"/>
    <property type="evidence" value="ECO:0000314"/>
    <property type="project" value="UniProtKB"/>
</dbReference>
<dbReference type="CDD" id="cd04709">
    <property type="entry name" value="BAH_MTA"/>
    <property type="match status" value="1"/>
</dbReference>
<dbReference type="CDD" id="cd11661">
    <property type="entry name" value="SANT_MTA3_like"/>
    <property type="match status" value="1"/>
</dbReference>
<dbReference type="CDD" id="cd00202">
    <property type="entry name" value="ZnF_GATA"/>
    <property type="match status" value="1"/>
</dbReference>
<dbReference type="FunFam" id="1.10.10.60:FF:000012">
    <property type="entry name" value="Metastasis-associated 1 family, member 3"/>
    <property type="match status" value="1"/>
</dbReference>
<dbReference type="FunFam" id="2.30.30.490:FF:000001">
    <property type="entry name" value="Metastasis-associated 1 family, member 3"/>
    <property type="match status" value="1"/>
</dbReference>
<dbReference type="FunFam" id="4.10.1240.50:FF:000001">
    <property type="entry name" value="Metastasis-associated 1 family, member 3"/>
    <property type="match status" value="1"/>
</dbReference>
<dbReference type="Gene3D" id="2.30.30.490">
    <property type="match status" value="1"/>
</dbReference>
<dbReference type="Gene3D" id="4.10.1240.50">
    <property type="match status" value="1"/>
</dbReference>
<dbReference type="Gene3D" id="1.10.10.60">
    <property type="entry name" value="Homeodomain-like"/>
    <property type="match status" value="1"/>
</dbReference>
<dbReference type="InterPro" id="IPR001025">
    <property type="entry name" value="BAH_dom"/>
</dbReference>
<dbReference type="InterPro" id="IPR043151">
    <property type="entry name" value="BAH_sf"/>
</dbReference>
<dbReference type="InterPro" id="IPR000949">
    <property type="entry name" value="ELM2_dom"/>
</dbReference>
<dbReference type="InterPro" id="IPR009057">
    <property type="entry name" value="Homeodomain-like_sf"/>
</dbReference>
<dbReference type="InterPro" id="IPR040138">
    <property type="entry name" value="MIER/MTA"/>
</dbReference>
<dbReference type="InterPro" id="IPR035170">
    <property type="entry name" value="MTA1_R1"/>
</dbReference>
<dbReference type="InterPro" id="IPR001005">
    <property type="entry name" value="SANT/Myb"/>
</dbReference>
<dbReference type="InterPro" id="IPR017884">
    <property type="entry name" value="SANT_dom"/>
</dbReference>
<dbReference type="InterPro" id="IPR000679">
    <property type="entry name" value="Znf_GATA"/>
</dbReference>
<dbReference type="PANTHER" id="PTHR10865">
    <property type="entry name" value="METASTASIS-ASSOCIATED PROTEIN AND MESODERM INDUCTION EARLY RESPONSE PROTEIN"/>
    <property type="match status" value="1"/>
</dbReference>
<dbReference type="PANTHER" id="PTHR10865:SF5">
    <property type="entry name" value="METASTASIS-ASSOCIATED PROTEIN MTA1"/>
    <property type="match status" value="1"/>
</dbReference>
<dbReference type="Pfam" id="PF01426">
    <property type="entry name" value="BAH"/>
    <property type="match status" value="2"/>
</dbReference>
<dbReference type="Pfam" id="PF01448">
    <property type="entry name" value="ELM2"/>
    <property type="match status" value="1"/>
</dbReference>
<dbReference type="Pfam" id="PF00320">
    <property type="entry name" value="GATA"/>
    <property type="match status" value="1"/>
</dbReference>
<dbReference type="Pfam" id="PF17226">
    <property type="entry name" value="MTA_R1"/>
    <property type="match status" value="1"/>
</dbReference>
<dbReference type="Pfam" id="PF00249">
    <property type="entry name" value="Myb_DNA-binding"/>
    <property type="match status" value="1"/>
</dbReference>
<dbReference type="SMART" id="SM00439">
    <property type="entry name" value="BAH"/>
    <property type="match status" value="1"/>
</dbReference>
<dbReference type="SMART" id="SM01189">
    <property type="entry name" value="ELM2"/>
    <property type="match status" value="1"/>
</dbReference>
<dbReference type="SMART" id="SM00717">
    <property type="entry name" value="SANT"/>
    <property type="match status" value="1"/>
</dbReference>
<dbReference type="SMART" id="SM00401">
    <property type="entry name" value="ZnF_GATA"/>
    <property type="match status" value="1"/>
</dbReference>
<dbReference type="SUPFAM" id="SSF46689">
    <property type="entry name" value="Homeodomain-like"/>
    <property type="match status" value="1"/>
</dbReference>
<dbReference type="PROSITE" id="PS51038">
    <property type="entry name" value="BAH"/>
    <property type="match status" value="1"/>
</dbReference>
<dbReference type="PROSITE" id="PS51156">
    <property type="entry name" value="ELM2"/>
    <property type="match status" value="1"/>
</dbReference>
<dbReference type="PROSITE" id="PS51293">
    <property type="entry name" value="SANT"/>
    <property type="match status" value="1"/>
</dbReference>
<organism>
    <name type="scientific">Mus musculus</name>
    <name type="common">Mouse</name>
    <dbReference type="NCBI Taxonomy" id="10090"/>
    <lineage>
        <taxon>Eukaryota</taxon>
        <taxon>Metazoa</taxon>
        <taxon>Chordata</taxon>
        <taxon>Craniata</taxon>
        <taxon>Vertebrata</taxon>
        <taxon>Euteleostomi</taxon>
        <taxon>Mammalia</taxon>
        <taxon>Eutheria</taxon>
        <taxon>Euarchontoglires</taxon>
        <taxon>Glires</taxon>
        <taxon>Rodentia</taxon>
        <taxon>Myomorpha</taxon>
        <taxon>Muroidea</taxon>
        <taxon>Muridae</taxon>
        <taxon>Murinae</taxon>
        <taxon>Mus</taxon>
        <taxon>Mus</taxon>
    </lineage>
</organism>
<proteinExistence type="evidence at protein level"/>